<protein>
    <recommendedName>
        <fullName>Ubiquitin-like protein ATG12</fullName>
    </recommendedName>
    <alternativeName>
        <fullName>Autophagy-related protein 12</fullName>
    </alternativeName>
</protein>
<comment type="function">
    <text evidence="1">Ubiquitin-like protein involved in cytoplasm to vacuole transport (Cvt), autophagy vesicles formation, mitophagy, and nucleophagy. Conjugation with atg5 through a ubiquitin-like conjugating system involving also atg7 as an E1-like activating enzyme and atg10 as an E2-like conjugating enzyme, is essential for its function. The atg12-atg5 conjugate functions as an E3-like enzyme which is required for lipidation of atg8 and atg8 association to the vesicle membranes (By similarity).</text>
</comment>
<comment type="subunit">
    <text evidence="1">Forms a conjugate with atg5.</text>
</comment>
<comment type="subcellular location">
    <subcellularLocation>
        <location evidence="1">Preautophagosomal structure membrane</location>
        <topology evidence="1">Peripheral membrane protein</topology>
    </subcellularLocation>
</comment>
<comment type="similarity">
    <text evidence="3">Belongs to the ATG12 family.</text>
</comment>
<comment type="sequence caution" evidence="3">
    <conflict type="erroneous initiation">
        <sequence resource="EMBL-CDS" id="EAW16137"/>
    </conflict>
</comment>
<accession>A1DMW6</accession>
<reference key="1">
    <citation type="journal article" date="2008" name="PLoS Genet.">
        <title>Genomic islands in the pathogenic filamentous fungus Aspergillus fumigatus.</title>
        <authorList>
            <person name="Fedorova N.D."/>
            <person name="Khaldi N."/>
            <person name="Joardar V.S."/>
            <person name="Maiti R."/>
            <person name="Amedeo P."/>
            <person name="Anderson M.J."/>
            <person name="Crabtree J."/>
            <person name="Silva J.C."/>
            <person name="Badger J.H."/>
            <person name="Albarraq A."/>
            <person name="Angiuoli S."/>
            <person name="Bussey H."/>
            <person name="Bowyer P."/>
            <person name="Cotty P.J."/>
            <person name="Dyer P.S."/>
            <person name="Egan A."/>
            <person name="Galens K."/>
            <person name="Fraser-Liggett C.M."/>
            <person name="Haas B.J."/>
            <person name="Inman J.M."/>
            <person name="Kent R."/>
            <person name="Lemieux S."/>
            <person name="Malavazi I."/>
            <person name="Orvis J."/>
            <person name="Roemer T."/>
            <person name="Ronning C.M."/>
            <person name="Sundaram J.P."/>
            <person name="Sutton G."/>
            <person name="Turner G."/>
            <person name="Venter J.C."/>
            <person name="White O.R."/>
            <person name="Whitty B.R."/>
            <person name="Youngman P."/>
            <person name="Wolfe K.H."/>
            <person name="Goldman G.H."/>
            <person name="Wortman J.R."/>
            <person name="Jiang B."/>
            <person name="Denning D.W."/>
            <person name="Nierman W.C."/>
        </authorList>
    </citation>
    <scope>NUCLEOTIDE SEQUENCE [LARGE SCALE GENOMIC DNA]</scope>
    <source>
        <strain>ATCC 1020 / DSM 3700 / CBS 544.65 / FGSC A1164 / JCM 1740 / NRRL 181 / WB 181</strain>
    </source>
</reference>
<evidence type="ECO:0000250" key="1"/>
<evidence type="ECO:0000256" key="2">
    <source>
        <dbReference type="SAM" id="MobiDB-lite"/>
    </source>
</evidence>
<evidence type="ECO:0000305" key="3"/>
<organism>
    <name type="scientific">Neosartorya fischeri (strain ATCC 1020 / DSM 3700 / CBS 544.65 / FGSC A1164 / JCM 1740 / NRRL 181 / WB 181)</name>
    <name type="common">Aspergillus fischerianus</name>
    <dbReference type="NCBI Taxonomy" id="331117"/>
    <lineage>
        <taxon>Eukaryota</taxon>
        <taxon>Fungi</taxon>
        <taxon>Dikarya</taxon>
        <taxon>Ascomycota</taxon>
        <taxon>Pezizomycotina</taxon>
        <taxon>Eurotiomycetes</taxon>
        <taxon>Eurotiomycetidae</taxon>
        <taxon>Eurotiales</taxon>
        <taxon>Aspergillaceae</taxon>
        <taxon>Aspergillus</taxon>
        <taxon>Aspergillus subgen. Fumigati</taxon>
    </lineage>
</organism>
<keyword id="KW-0072">Autophagy</keyword>
<keyword id="KW-1017">Isopeptide bond</keyword>
<keyword id="KW-0472">Membrane</keyword>
<keyword id="KW-0653">Protein transport</keyword>
<keyword id="KW-1185">Reference proteome</keyword>
<keyword id="KW-0813">Transport</keyword>
<keyword id="KW-0833">Ubl conjugation pathway</keyword>
<feature type="chain" id="PRO_0000317935" description="Ubiquitin-like protein ATG12">
    <location>
        <begin position="1"/>
        <end position="174"/>
    </location>
</feature>
<feature type="region of interest" description="Disordered" evidence="2">
    <location>
        <begin position="1"/>
        <end position="57"/>
    </location>
</feature>
<feature type="compositionally biased region" description="Polar residues" evidence="2">
    <location>
        <begin position="8"/>
        <end position="26"/>
    </location>
</feature>
<feature type="cross-link" description="Glycyl lysine isopeptide (Gly-Lys) (interchain with K-163 in atg5)" evidence="1">
    <location>
        <position position="174"/>
    </location>
</feature>
<sequence>MDSPSPENPSGTNSPNPKSPQITGSRLSHRPAISQRPDLDSNTRSTPIPDDEHGADLPMTMSASVVLSSLPRDAHRALADAEAVDTGKVTVRFQPLPSAPILKNRVFKISASQKFETVVKFLRKKLDCKDTDSVFCYVNSVFAPGLDEGVGGLWRCFKTDDQLIVSYSMTPAFG</sequence>
<dbReference type="EMBL" id="DS027698">
    <property type="protein sequence ID" value="EAW16137.1"/>
    <property type="status" value="ALT_INIT"/>
    <property type="molecule type" value="Genomic_DNA"/>
</dbReference>
<dbReference type="RefSeq" id="XP_001258034.1">
    <property type="nucleotide sequence ID" value="XM_001258033.1"/>
</dbReference>
<dbReference type="SMR" id="A1DMW6"/>
<dbReference type="STRING" id="331117.A1DMW6"/>
<dbReference type="EnsemblFungi" id="EAW16137">
    <property type="protein sequence ID" value="EAW16137"/>
    <property type="gene ID" value="NFIA_054850"/>
</dbReference>
<dbReference type="GeneID" id="4584549"/>
<dbReference type="KEGG" id="nfi:NFIA_054850"/>
<dbReference type="VEuPathDB" id="FungiDB:NFIA_054850"/>
<dbReference type="eggNOG" id="KOG3439">
    <property type="taxonomic scope" value="Eukaryota"/>
</dbReference>
<dbReference type="OrthoDB" id="10003551at2759"/>
<dbReference type="Proteomes" id="UP000006702">
    <property type="component" value="Unassembled WGS sequence"/>
</dbReference>
<dbReference type="GO" id="GO:0034274">
    <property type="term" value="C:Atg12-Atg5-Atg16 complex"/>
    <property type="evidence" value="ECO:0007669"/>
    <property type="project" value="TreeGrafter"/>
</dbReference>
<dbReference type="GO" id="GO:0000421">
    <property type="term" value="C:autophagosome membrane"/>
    <property type="evidence" value="ECO:0007669"/>
    <property type="project" value="TreeGrafter"/>
</dbReference>
<dbReference type="GO" id="GO:0034045">
    <property type="term" value="C:phagophore assembly site membrane"/>
    <property type="evidence" value="ECO:0007669"/>
    <property type="project" value="UniProtKB-SubCell"/>
</dbReference>
<dbReference type="GO" id="GO:0019776">
    <property type="term" value="F:Atg8-family ligase activity"/>
    <property type="evidence" value="ECO:0007669"/>
    <property type="project" value="TreeGrafter"/>
</dbReference>
<dbReference type="GO" id="GO:0000045">
    <property type="term" value="P:autophagosome assembly"/>
    <property type="evidence" value="ECO:0007669"/>
    <property type="project" value="InterPro"/>
</dbReference>
<dbReference type="GO" id="GO:0097352">
    <property type="term" value="P:autophagosome maturation"/>
    <property type="evidence" value="ECO:0007669"/>
    <property type="project" value="TreeGrafter"/>
</dbReference>
<dbReference type="GO" id="GO:0000422">
    <property type="term" value="P:autophagy of mitochondrion"/>
    <property type="evidence" value="ECO:0007669"/>
    <property type="project" value="TreeGrafter"/>
</dbReference>
<dbReference type="GO" id="GO:0061723">
    <property type="term" value="P:glycophagy"/>
    <property type="evidence" value="ECO:0007669"/>
    <property type="project" value="TreeGrafter"/>
</dbReference>
<dbReference type="GO" id="GO:0034727">
    <property type="term" value="P:piecemeal microautophagy of the nucleus"/>
    <property type="evidence" value="ECO:0007669"/>
    <property type="project" value="TreeGrafter"/>
</dbReference>
<dbReference type="GO" id="GO:0015031">
    <property type="term" value="P:protein transport"/>
    <property type="evidence" value="ECO:0007669"/>
    <property type="project" value="UniProtKB-KW"/>
</dbReference>
<dbReference type="CDD" id="cd01612">
    <property type="entry name" value="Ubl_ATG12"/>
    <property type="match status" value="1"/>
</dbReference>
<dbReference type="FunFam" id="3.10.20.90:FF:000148">
    <property type="entry name" value="Ubiquitin-like protein ATG12"/>
    <property type="match status" value="1"/>
</dbReference>
<dbReference type="Gene3D" id="3.10.20.90">
    <property type="entry name" value="Phosphatidylinositol 3-kinase Catalytic Subunit, Chain A, domain 1"/>
    <property type="match status" value="1"/>
</dbReference>
<dbReference type="InterPro" id="IPR007242">
    <property type="entry name" value="Atg12"/>
</dbReference>
<dbReference type="InterPro" id="IPR029071">
    <property type="entry name" value="Ubiquitin-like_domsf"/>
</dbReference>
<dbReference type="PANTHER" id="PTHR13385">
    <property type="entry name" value="AUTOPHAGY PROTEIN 12"/>
    <property type="match status" value="1"/>
</dbReference>
<dbReference type="PANTHER" id="PTHR13385:SF0">
    <property type="entry name" value="UBIQUITIN-LIKE PROTEIN ATG12"/>
    <property type="match status" value="1"/>
</dbReference>
<dbReference type="Pfam" id="PF04110">
    <property type="entry name" value="APG12"/>
    <property type="match status" value="1"/>
</dbReference>
<dbReference type="SUPFAM" id="SSF54236">
    <property type="entry name" value="Ubiquitin-like"/>
    <property type="match status" value="1"/>
</dbReference>
<proteinExistence type="inferred from homology"/>
<name>ATG12_NEOFI</name>
<gene>
    <name type="primary">atg12</name>
    <name type="ORF">NFIA_054850</name>
</gene>